<dbReference type="EC" id="1.2.1.70" evidence="1"/>
<dbReference type="EMBL" id="CP001072">
    <property type="protein sequence ID" value="ACD47703.1"/>
    <property type="molecule type" value="Genomic_DNA"/>
</dbReference>
<dbReference type="RefSeq" id="WP_000418277.1">
    <property type="nucleotide sequence ID" value="NC_010698.2"/>
</dbReference>
<dbReference type="SMR" id="B2US71"/>
<dbReference type="KEGG" id="hps:HPSH_01245"/>
<dbReference type="HOGENOM" id="CLU_035113_2_2_7"/>
<dbReference type="UniPathway" id="UPA00251">
    <property type="reaction ID" value="UER00316"/>
</dbReference>
<dbReference type="GO" id="GO:0008883">
    <property type="term" value="F:glutamyl-tRNA reductase activity"/>
    <property type="evidence" value="ECO:0007669"/>
    <property type="project" value="UniProtKB-UniRule"/>
</dbReference>
<dbReference type="GO" id="GO:0050661">
    <property type="term" value="F:NADP binding"/>
    <property type="evidence" value="ECO:0007669"/>
    <property type="project" value="InterPro"/>
</dbReference>
<dbReference type="GO" id="GO:0006782">
    <property type="term" value="P:protoporphyrinogen IX biosynthetic process"/>
    <property type="evidence" value="ECO:0007669"/>
    <property type="project" value="UniProtKB-UniRule"/>
</dbReference>
<dbReference type="CDD" id="cd05213">
    <property type="entry name" value="NAD_bind_Glutamyl_tRNA_reduct"/>
    <property type="match status" value="1"/>
</dbReference>
<dbReference type="FunFam" id="3.30.460.30:FF:000001">
    <property type="entry name" value="Glutamyl-tRNA reductase"/>
    <property type="match status" value="1"/>
</dbReference>
<dbReference type="Gene3D" id="3.30.460.30">
    <property type="entry name" value="Glutamyl-tRNA reductase, N-terminal domain"/>
    <property type="match status" value="1"/>
</dbReference>
<dbReference type="Gene3D" id="3.40.50.720">
    <property type="entry name" value="NAD(P)-binding Rossmann-like Domain"/>
    <property type="match status" value="1"/>
</dbReference>
<dbReference type="HAMAP" id="MF_00087">
    <property type="entry name" value="Glu_tRNA_reductase"/>
    <property type="match status" value="1"/>
</dbReference>
<dbReference type="InterPro" id="IPR000343">
    <property type="entry name" value="4pyrrol_synth_GluRdtase"/>
</dbReference>
<dbReference type="InterPro" id="IPR015896">
    <property type="entry name" value="4pyrrol_synth_GluRdtase_dimer"/>
</dbReference>
<dbReference type="InterPro" id="IPR015895">
    <property type="entry name" value="4pyrrol_synth_GluRdtase_N"/>
</dbReference>
<dbReference type="InterPro" id="IPR018214">
    <property type="entry name" value="GluRdtase_CS"/>
</dbReference>
<dbReference type="InterPro" id="IPR036453">
    <property type="entry name" value="GluRdtase_dimer_dom_sf"/>
</dbReference>
<dbReference type="InterPro" id="IPR036343">
    <property type="entry name" value="GluRdtase_N_sf"/>
</dbReference>
<dbReference type="InterPro" id="IPR036291">
    <property type="entry name" value="NAD(P)-bd_dom_sf"/>
</dbReference>
<dbReference type="InterPro" id="IPR006151">
    <property type="entry name" value="Shikm_DH/Glu-tRNA_Rdtase"/>
</dbReference>
<dbReference type="NCBIfam" id="TIGR01035">
    <property type="entry name" value="hemA"/>
    <property type="match status" value="1"/>
</dbReference>
<dbReference type="PANTHER" id="PTHR43120">
    <property type="entry name" value="GLUTAMYL-TRNA REDUCTASE 1, CHLOROPLASTIC"/>
    <property type="match status" value="1"/>
</dbReference>
<dbReference type="PANTHER" id="PTHR43120:SF1">
    <property type="entry name" value="GLUTAMYL-TRNA REDUCTASE 1, CHLOROPLASTIC"/>
    <property type="match status" value="1"/>
</dbReference>
<dbReference type="Pfam" id="PF00745">
    <property type="entry name" value="GlutR_dimer"/>
    <property type="match status" value="1"/>
</dbReference>
<dbReference type="Pfam" id="PF05201">
    <property type="entry name" value="GlutR_N"/>
    <property type="match status" value="1"/>
</dbReference>
<dbReference type="Pfam" id="PF01488">
    <property type="entry name" value="Shikimate_DH"/>
    <property type="match status" value="1"/>
</dbReference>
<dbReference type="PIRSF" id="PIRSF000445">
    <property type="entry name" value="4pyrrol_synth_GluRdtase"/>
    <property type="match status" value="1"/>
</dbReference>
<dbReference type="SUPFAM" id="SSF69742">
    <property type="entry name" value="Glutamyl tRNA-reductase catalytic, N-terminal domain"/>
    <property type="match status" value="1"/>
</dbReference>
<dbReference type="SUPFAM" id="SSF69075">
    <property type="entry name" value="Glutamyl tRNA-reductase dimerization domain"/>
    <property type="match status" value="1"/>
</dbReference>
<dbReference type="SUPFAM" id="SSF51735">
    <property type="entry name" value="NAD(P)-binding Rossmann-fold domains"/>
    <property type="match status" value="1"/>
</dbReference>
<dbReference type="PROSITE" id="PS00747">
    <property type="entry name" value="GLUTR"/>
    <property type="match status" value="1"/>
</dbReference>
<reference key="1">
    <citation type="submission" date="2008-05" db="EMBL/GenBank/DDBJ databases">
        <title>Genome sequence of Helicobacter pylori from the remote Amazon: traces of Asian ancestry of the first Americans.</title>
        <authorList>
            <person name="Kersulyte D."/>
            <person name="Kalia A."/>
            <person name="Gilman R.H."/>
            <person name="Berg D.E."/>
        </authorList>
    </citation>
    <scope>NUCLEOTIDE SEQUENCE [LARGE SCALE GENOMIC DNA]</scope>
    <source>
        <strain>Shi470</strain>
    </source>
</reference>
<feature type="chain" id="PRO_1000093145" description="Glutamyl-tRNA reductase">
    <location>
        <begin position="1"/>
        <end position="449"/>
    </location>
</feature>
<feature type="active site" description="Nucleophile" evidence="1">
    <location>
        <position position="59"/>
    </location>
</feature>
<feature type="binding site" evidence="1">
    <location>
        <begin position="58"/>
        <end position="61"/>
    </location>
    <ligand>
        <name>substrate</name>
    </ligand>
</feature>
<feature type="binding site" evidence="1">
    <location>
        <position position="121"/>
    </location>
    <ligand>
        <name>substrate</name>
    </ligand>
</feature>
<feature type="binding site" evidence="1">
    <location>
        <begin position="126"/>
        <end position="128"/>
    </location>
    <ligand>
        <name>substrate</name>
    </ligand>
</feature>
<feature type="binding site" evidence="1">
    <location>
        <position position="132"/>
    </location>
    <ligand>
        <name>substrate</name>
    </ligand>
</feature>
<feature type="binding site" evidence="1">
    <location>
        <begin position="203"/>
        <end position="208"/>
    </location>
    <ligand>
        <name>NADP(+)</name>
        <dbReference type="ChEBI" id="CHEBI:58349"/>
    </ligand>
</feature>
<feature type="site" description="Important for activity" evidence="1">
    <location>
        <position position="111"/>
    </location>
</feature>
<keyword id="KW-0521">NADP</keyword>
<keyword id="KW-0560">Oxidoreductase</keyword>
<keyword id="KW-0627">Porphyrin biosynthesis</keyword>
<organism>
    <name type="scientific">Helicobacter pylori (strain Shi470)</name>
    <dbReference type="NCBI Taxonomy" id="512562"/>
    <lineage>
        <taxon>Bacteria</taxon>
        <taxon>Pseudomonadati</taxon>
        <taxon>Campylobacterota</taxon>
        <taxon>Epsilonproteobacteria</taxon>
        <taxon>Campylobacterales</taxon>
        <taxon>Helicobacteraceae</taxon>
        <taxon>Helicobacter</taxon>
    </lineage>
</organism>
<sequence length="449" mass="51723">MELETHLSKYFTLAFTHKSMGLEMREKLAINSSATLKEFLQTIKNHCPNIKECMVLSTCNRFEIYASLKHGAHANEQKSALLKILAQNKKMSVSDLEKCVLMSVDESAVHHVFSVCSSLDSLVVGETQITGQMKNAYKFAFEEKFCSKDLTRLLHFAFKCAAKVRNLTGISKQGVSISSVAVKEALNIFEKERIKDKKALVIGLGEMAQLVIKHLLNKQFEALILGRNEAKFEDFIKELEEPKKVSFQNIENLNAYINEYQLLFCATSSPHFIVQNDMLKETIFRRFWFDLAVPRNIEKPVLDNIFLYSVDDLEPMVRENVENRQESRTKAYEIVGLATMEFYQWIQSLEVEPLIKDLRELARISAQKELQKALKKRYVPKEYESNIEKILHNAFNTFLHHPTIALKKNAQKEESDVLVGAIKNLFNLDKSSANHAQNLNLYKCEYYEE</sequence>
<name>HEM1_HELPS</name>
<comment type="function">
    <text evidence="1">Catalyzes the NADPH-dependent reduction of glutamyl-tRNA(Glu) to glutamate 1-semialdehyde (GSA).</text>
</comment>
<comment type="catalytic activity">
    <reaction evidence="1">
        <text>(S)-4-amino-5-oxopentanoate + tRNA(Glu) + NADP(+) = L-glutamyl-tRNA(Glu) + NADPH + H(+)</text>
        <dbReference type="Rhea" id="RHEA:12344"/>
        <dbReference type="Rhea" id="RHEA-COMP:9663"/>
        <dbReference type="Rhea" id="RHEA-COMP:9680"/>
        <dbReference type="ChEBI" id="CHEBI:15378"/>
        <dbReference type="ChEBI" id="CHEBI:57501"/>
        <dbReference type="ChEBI" id="CHEBI:57783"/>
        <dbReference type="ChEBI" id="CHEBI:58349"/>
        <dbReference type="ChEBI" id="CHEBI:78442"/>
        <dbReference type="ChEBI" id="CHEBI:78520"/>
        <dbReference type="EC" id="1.2.1.70"/>
    </reaction>
</comment>
<comment type="pathway">
    <text evidence="1">Porphyrin-containing compound metabolism; protoporphyrin-IX biosynthesis; 5-aminolevulinate from L-glutamyl-tRNA(Glu): step 1/2.</text>
</comment>
<comment type="subunit">
    <text evidence="1">Homodimer.</text>
</comment>
<comment type="domain">
    <text evidence="1">Possesses an unusual extended V-shaped dimeric structure with each monomer consisting of three distinct domains arranged along a curved 'spinal' alpha-helix. The N-terminal catalytic domain specifically recognizes the glutamate moiety of the substrate. The second domain is the NADPH-binding domain, and the third C-terminal domain is responsible for dimerization.</text>
</comment>
<comment type="miscellaneous">
    <text evidence="1">During catalysis, the active site Cys acts as a nucleophile attacking the alpha-carbonyl group of tRNA-bound glutamate with the formation of a thioester intermediate between enzyme and glutamate, and the concomitant release of tRNA(Glu). The thioester intermediate is finally reduced by direct hydride transfer from NADPH, to form the product GSA.</text>
</comment>
<comment type="similarity">
    <text evidence="1">Belongs to the glutamyl-tRNA reductase family.</text>
</comment>
<proteinExistence type="inferred from homology"/>
<accession>B2US71</accession>
<evidence type="ECO:0000255" key="1">
    <source>
        <dbReference type="HAMAP-Rule" id="MF_00087"/>
    </source>
</evidence>
<protein>
    <recommendedName>
        <fullName evidence="1">Glutamyl-tRNA reductase</fullName>
        <shortName evidence="1">GluTR</shortName>
        <ecNumber evidence="1">1.2.1.70</ecNumber>
    </recommendedName>
</protein>
<gene>
    <name evidence="1" type="primary">hemA</name>
    <name type="ordered locus">HPSH_01245</name>
</gene>